<feature type="chain" id="PRO_1000091153" description="UDP-N-acetylmuramate--L-alanine ligase">
    <location>
        <begin position="1"/>
        <end position="477"/>
    </location>
</feature>
<feature type="binding site" evidence="1">
    <location>
        <begin position="122"/>
        <end position="128"/>
    </location>
    <ligand>
        <name>ATP</name>
        <dbReference type="ChEBI" id="CHEBI:30616"/>
    </ligand>
</feature>
<protein>
    <recommendedName>
        <fullName evidence="1">UDP-N-acetylmuramate--L-alanine ligase</fullName>
        <ecNumber evidence="1">6.3.2.8</ecNumber>
    </recommendedName>
    <alternativeName>
        <fullName evidence="1">UDP-N-acetylmuramoyl-L-alanine synthetase</fullName>
    </alternativeName>
</protein>
<proteinExistence type="inferred from homology"/>
<comment type="function">
    <text evidence="1">Cell wall formation.</text>
</comment>
<comment type="catalytic activity">
    <reaction evidence="1">
        <text>UDP-N-acetyl-alpha-D-muramate + L-alanine + ATP = UDP-N-acetyl-alpha-D-muramoyl-L-alanine + ADP + phosphate + H(+)</text>
        <dbReference type="Rhea" id="RHEA:23372"/>
        <dbReference type="ChEBI" id="CHEBI:15378"/>
        <dbReference type="ChEBI" id="CHEBI:30616"/>
        <dbReference type="ChEBI" id="CHEBI:43474"/>
        <dbReference type="ChEBI" id="CHEBI:57972"/>
        <dbReference type="ChEBI" id="CHEBI:70757"/>
        <dbReference type="ChEBI" id="CHEBI:83898"/>
        <dbReference type="ChEBI" id="CHEBI:456216"/>
        <dbReference type="EC" id="6.3.2.8"/>
    </reaction>
</comment>
<comment type="pathway">
    <text evidence="1">Cell wall biogenesis; peptidoglycan biosynthesis.</text>
</comment>
<comment type="subcellular location">
    <subcellularLocation>
        <location evidence="1">Cytoplasm</location>
    </subcellularLocation>
</comment>
<comment type="similarity">
    <text evidence="1">Belongs to the MurCDEF family.</text>
</comment>
<accession>B0U4Z6</accession>
<evidence type="ECO:0000255" key="1">
    <source>
        <dbReference type="HAMAP-Rule" id="MF_00046"/>
    </source>
</evidence>
<name>MURC_XYLFM</name>
<sequence length="477" mass="50809">MIRRLQDNGDLIRAFPRVHFVGIGGAGMTGIAEVMLTLGYEVSGSDNADNVATRRLATLGARVMRGHSAANVLGTDCVVVSSAIREDNPELMEARSQRIPIMPRAAMLAELMRFRHGIAVAGTHGKTTTTSLIAAVLSEGGLDPTFVIGGQLLAAGANAKLGAGQWLVVEADESDGSFLRLNPLVAVVTNIDADHLENYGNDFSRIKDAFTEFLQRLPFYGLALLCLDDPEVAELAGKARRHVMTYGIDAAADVRAEDVVQDGARMYFTLCLPEGKVIPVTLALPGRHNVLNALAASAVGWQLGVPPEVIGRALKSFVGIGRRFNDLGDVAIGNGACVRLIDDYGHHPRELEAVFAAARGGWPDKRLVVAFQPHRYSRTRDQFDAFAAVLSSVDALVLSEVYPAGEVPIPGADAKALARAIRARGRSEPVVVGQVASLIEVLPDVLQEGDLLLMMGAGDIGSIAQRIVHDGFVFGEV</sequence>
<keyword id="KW-0067">ATP-binding</keyword>
<keyword id="KW-0131">Cell cycle</keyword>
<keyword id="KW-0132">Cell division</keyword>
<keyword id="KW-0133">Cell shape</keyword>
<keyword id="KW-0961">Cell wall biogenesis/degradation</keyword>
<keyword id="KW-0963">Cytoplasm</keyword>
<keyword id="KW-0436">Ligase</keyword>
<keyword id="KW-0547">Nucleotide-binding</keyword>
<keyword id="KW-0573">Peptidoglycan synthesis</keyword>
<organism>
    <name type="scientific">Xylella fastidiosa (strain M12)</name>
    <dbReference type="NCBI Taxonomy" id="405440"/>
    <lineage>
        <taxon>Bacteria</taxon>
        <taxon>Pseudomonadati</taxon>
        <taxon>Pseudomonadota</taxon>
        <taxon>Gammaproteobacteria</taxon>
        <taxon>Lysobacterales</taxon>
        <taxon>Lysobacteraceae</taxon>
        <taxon>Xylella</taxon>
    </lineage>
</organism>
<reference key="1">
    <citation type="journal article" date="2010" name="J. Bacteriol.">
        <title>Whole genome sequences of two Xylella fastidiosa strains (M12 and M23) causing almond leaf scorch disease in California.</title>
        <authorList>
            <person name="Chen J."/>
            <person name="Xie G."/>
            <person name="Han S."/>
            <person name="Chertkov O."/>
            <person name="Sims D."/>
            <person name="Civerolo E.L."/>
        </authorList>
    </citation>
    <scope>NUCLEOTIDE SEQUENCE [LARGE SCALE GENOMIC DNA]</scope>
    <source>
        <strain>M12</strain>
    </source>
</reference>
<dbReference type="EC" id="6.3.2.8" evidence="1"/>
<dbReference type="EMBL" id="CP000941">
    <property type="protein sequence ID" value="ACA12913.1"/>
    <property type="molecule type" value="Genomic_DNA"/>
</dbReference>
<dbReference type="RefSeq" id="WP_004084472.1">
    <property type="nucleotide sequence ID" value="NC_010513.1"/>
</dbReference>
<dbReference type="SMR" id="B0U4Z6"/>
<dbReference type="KEGG" id="xfm:Xfasm12_2047"/>
<dbReference type="HOGENOM" id="CLU_028104_2_2_6"/>
<dbReference type="UniPathway" id="UPA00219"/>
<dbReference type="GO" id="GO:0005737">
    <property type="term" value="C:cytoplasm"/>
    <property type="evidence" value="ECO:0007669"/>
    <property type="project" value="UniProtKB-SubCell"/>
</dbReference>
<dbReference type="GO" id="GO:0005524">
    <property type="term" value="F:ATP binding"/>
    <property type="evidence" value="ECO:0007669"/>
    <property type="project" value="UniProtKB-UniRule"/>
</dbReference>
<dbReference type="GO" id="GO:0008763">
    <property type="term" value="F:UDP-N-acetylmuramate-L-alanine ligase activity"/>
    <property type="evidence" value="ECO:0007669"/>
    <property type="project" value="UniProtKB-UniRule"/>
</dbReference>
<dbReference type="GO" id="GO:0051301">
    <property type="term" value="P:cell division"/>
    <property type="evidence" value="ECO:0007669"/>
    <property type="project" value="UniProtKB-KW"/>
</dbReference>
<dbReference type="GO" id="GO:0071555">
    <property type="term" value="P:cell wall organization"/>
    <property type="evidence" value="ECO:0007669"/>
    <property type="project" value="UniProtKB-KW"/>
</dbReference>
<dbReference type="GO" id="GO:0009252">
    <property type="term" value="P:peptidoglycan biosynthetic process"/>
    <property type="evidence" value="ECO:0007669"/>
    <property type="project" value="UniProtKB-UniRule"/>
</dbReference>
<dbReference type="GO" id="GO:0008360">
    <property type="term" value="P:regulation of cell shape"/>
    <property type="evidence" value="ECO:0007669"/>
    <property type="project" value="UniProtKB-KW"/>
</dbReference>
<dbReference type="Gene3D" id="3.90.190.20">
    <property type="entry name" value="Mur ligase, C-terminal domain"/>
    <property type="match status" value="1"/>
</dbReference>
<dbReference type="Gene3D" id="3.40.1190.10">
    <property type="entry name" value="Mur-like, catalytic domain"/>
    <property type="match status" value="1"/>
</dbReference>
<dbReference type="Gene3D" id="3.40.50.720">
    <property type="entry name" value="NAD(P)-binding Rossmann-like Domain"/>
    <property type="match status" value="1"/>
</dbReference>
<dbReference type="HAMAP" id="MF_00046">
    <property type="entry name" value="MurC"/>
    <property type="match status" value="1"/>
</dbReference>
<dbReference type="InterPro" id="IPR036565">
    <property type="entry name" value="Mur-like_cat_sf"/>
</dbReference>
<dbReference type="InterPro" id="IPR004101">
    <property type="entry name" value="Mur_ligase_C"/>
</dbReference>
<dbReference type="InterPro" id="IPR036615">
    <property type="entry name" value="Mur_ligase_C_dom_sf"/>
</dbReference>
<dbReference type="InterPro" id="IPR013221">
    <property type="entry name" value="Mur_ligase_cen"/>
</dbReference>
<dbReference type="InterPro" id="IPR000713">
    <property type="entry name" value="Mur_ligase_N"/>
</dbReference>
<dbReference type="InterPro" id="IPR050061">
    <property type="entry name" value="MurCDEF_pg_biosynth"/>
</dbReference>
<dbReference type="InterPro" id="IPR005758">
    <property type="entry name" value="UDP-N-AcMur_Ala_ligase_MurC"/>
</dbReference>
<dbReference type="NCBIfam" id="TIGR01082">
    <property type="entry name" value="murC"/>
    <property type="match status" value="1"/>
</dbReference>
<dbReference type="PANTHER" id="PTHR43445:SF3">
    <property type="entry name" value="UDP-N-ACETYLMURAMATE--L-ALANINE LIGASE"/>
    <property type="match status" value="1"/>
</dbReference>
<dbReference type="PANTHER" id="PTHR43445">
    <property type="entry name" value="UDP-N-ACETYLMURAMATE--L-ALANINE LIGASE-RELATED"/>
    <property type="match status" value="1"/>
</dbReference>
<dbReference type="Pfam" id="PF01225">
    <property type="entry name" value="Mur_ligase"/>
    <property type="match status" value="1"/>
</dbReference>
<dbReference type="Pfam" id="PF02875">
    <property type="entry name" value="Mur_ligase_C"/>
    <property type="match status" value="1"/>
</dbReference>
<dbReference type="Pfam" id="PF08245">
    <property type="entry name" value="Mur_ligase_M"/>
    <property type="match status" value="1"/>
</dbReference>
<dbReference type="SUPFAM" id="SSF51984">
    <property type="entry name" value="MurCD N-terminal domain"/>
    <property type="match status" value="1"/>
</dbReference>
<dbReference type="SUPFAM" id="SSF53623">
    <property type="entry name" value="MurD-like peptide ligases, catalytic domain"/>
    <property type="match status" value="1"/>
</dbReference>
<dbReference type="SUPFAM" id="SSF53244">
    <property type="entry name" value="MurD-like peptide ligases, peptide-binding domain"/>
    <property type="match status" value="1"/>
</dbReference>
<gene>
    <name evidence="1" type="primary">murC</name>
    <name type="ordered locus">Xfasm12_2047</name>
</gene>